<proteinExistence type="inferred from homology"/>
<sequence>MGDPRRLGKKYDTPNHPWIGERIQKEKEISQKYGLVNKKELWKMETQLRNYRRQARKLISDTTTQGGKEAVQLFNVLKRYAILIEEEPTLDHVLSLNIESILERRLQTIVFRKGLAKTPKQARQFIVHGHIAVNGKRVTAPAYLISVAENDAIEYVSNSPMASENHPERTAATSEENQ</sequence>
<accession>Q6LXN0</accession>
<protein>
    <recommendedName>
        <fullName evidence="1">Small ribosomal subunit protein uS4</fullName>
    </recommendedName>
    <alternativeName>
        <fullName evidence="3">30S ribosomal protein S4</fullName>
    </alternativeName>
</protein>
<reference key="1">
    <citation type="journal article" date="2004" name="J. Bacteriol.">
        <title>Complete genome sequence of the genetically tractable hydrogenotrophic methanogen Methanococcus maripaludis.</title>
        <authorList>
            <person name="Hendrickson E.L."/>
            <person name="Kaul R."/>
            <person name="Zhou Y."/>
            <person name="Bovee D."/>
            <person name="Chapman P."/>
            <person name="Chung J."/>
            <person name="Conway de Macario E."/>
            <person name="Dodsworth J.A."/>
            <person name="Gillett W."/>
            <person name="Graham D.E."/>
            <person name="Hackett M."/>
            <person name="Haydock A.K."/>
            <person name="Kang A."/>
            <person name="Land M.L."/>
            <person name="Levy R."/>
            <person name="Lie T.J."/>
            <person name="Major T.A."/>
            <person name="Moore B.C."/>
            <person name="Porat I."/>
            <person name="Palmeiri A."/>
            <person name="Rouse G."/>
            <person name="Saenphimmachak C."/>
            <person name="Soell D."/>
            <person name="Van Dien S."/>
            <person name="Wang T."/>
            <person name="Whitman W.B."/>
            <person name="Xia Q."/>
            <person name="Zhang Y."/>
            <person name="Larimer F.W."/>
            <person name="Olson M.V."/>
            <person name="Leigh J.A."/>
        </authorList>
    </citation>
    <scope>NUCLEOTIDE SEQUENCE [LARGE SCALE GENOMIC DNA]</scope>
    <source>
        <strain>DSM 14266 / JCM 13030 / NBRC 101832 / S2 / LL</strain>
    </source>
</reference>
<keyword id="KW-1185">Reference proteome</keyword>
<keyword id="KW-0687">Ribonucleoprotein</keyword>
<keyword id="KW-0689">Ribosomal protein</keyword>
<keyword id="KW-0694">RNA-binding</keyword>
<keyword id="KW-0699">rRNA-binding</keyword>
<organism>
    <name type="scientific">Methanococcus maripaludis (strain DSM 14266 / JCM 13030 / NBRC 101832 / S2 / LL)</name>
    <dbReference type="NCBI Taxonomy" id="267377"/>
    <lineage>
        <taxon>Archaea</taxon>
        <taxon>Methanobacteriati</taxon>
        <taxon>Methanobacteriota</taxon>
        <taxon>Methanomada group</taxon>
        <taxon>Methanococci</taxon>
        <taxon>Methanococcales</taxon>
        <taxon>Methanococcaceae</taxon>
        <taxon>Methanococcus</taxon>
    </lineage>
</organism>
<feature type="chain" id="PRO_0000132511" description="Small ribosomal subunit protein uS4">
    <location>
        <begin position="1"/>
        <end position="178"/>
    </location>
</feature>
<feature type="domain" description="S4 RNA-binding" evidence="1">
    <location>
        <begin position="104"/>
        <end position="166"/>
    </location>
</feature>
<feature type="region of interest" description="Disordered" evidence="2">
    <location>
        <begin position="158"/>
        <end position="178"/>
    </location>
</feature>
<gene>
    <name evidence="1" type="primary">rps4</name>
    <name type="ordered locus">MMP1320</name>
</gene>
<evidence type="ECO:0000255" key="1">
    <source>
        <dbReference type="HAMAP-Rule" id="MF_01306"/>
    </source>
</evidence>
<evidence type="ECO:0000256" key="2">
    <source>
        <dbReference type="SAM" id="MobiDB-lite"/>
    </source>
</evidence>
<evidence type="ECO:0000305" key="3"/>
<comment type="function">
    <text evidence="1">One of the primary rRNA binding proteins, it binds directly to 16S rRNA where it nucleates assembly of the body of the 30S subunit.</text>
</comment>
<comment type="function">
    <text evidence="1">With S5 and S12 plays an important role in translational accuracy.</text>
</comment>
<comment type="subunit">
    <text evidence="1">Part of the 30S ribosomal subunit. Contacts protein S5. The interaction surface between S4 and S5 is involved in control of translational fidelity.</text>
</comment>
<comment type="similarity">
    <text evidence="1">Belongs to the universal ribosomal protein uS4 family.</text>
</comment>
<dbReference type="EMBL" id="BX950229">
    <property type="protein sequence ID" value="CAF30876.1"/>
    <property type="molecule type" value="Genomic_DNA"/>
</dbReference>
<dbReference type="RefSeq" id="WP_011171264.1">
    <property type="nucleotide sequence ID" value="NC_005791.1"/>
</dbReference>
<dbReference type="SMR" id="Q6LXN0"/>
<dbReference type="STRING" id="267377.MMP1320"/>
<dbReference type="EnsemblBacteria" id="CAF30876">
    <property type="protein sequence ID" value="CAF30876"/>
    <property type="gene ID" value="MMP1320"/>
</dbReference>
<dbReference type="KEGG" id="mmp:MMP1320"/>
<dbReference type="PATRIC" id="fig|267377.15.peg.1355"/>
<dbReference type="eggNOG" id="arCOG04239">
    <property type="taxonomic scope" value="Archaea"/>
</dbReference>
<dbReference type="HOGENOM" id="CLU_089738_1_1_2"/>
<dbReference type="OrthoDB" id="10429at2157"/>
<dbReference type="Proteomes" id="UP000000590">
    <property type="component" value="Chromosome"/>
</dbReference>
<dbReference type="GO" id="GO:0015935">
    <property type="term" value="C:small ribosomal subunit"/>
    <property type="evidence" value="ECO:0007669"/>
    <property type="project" value="InterPro"/>
</dbReference>
<dbReference type="GO" id="GO:0019843">
    <property type="term" value="F:rRNA binding"/>
    <property type="evidence" value="ECO:0007669"/>
    <property type="project" value="UniProtKB-UniRule"/>
</dbReference>
<dbReference type="GO" id="GO:0003735">
    <property type="term" value="F:structural constituent of ribosome"/>
    <property type="evidence" value="ECO:0007669"/>
    <property type="project" value="InterPro"/>
</dbReference>
<dbReference type="GO" id="GO:0042274">
    <property type="term" value="P:ribosomal small subunit biogenesis"/>
    <property type="evidence" value="ECO:0007669"/>
    <property type="project" value="TreeGrafter"/>
</dbReference>
<dbReference type="GO" id="GO:0006412">
    <property type="term" value="P:translation"/>
    <property type="evidence" value="ECO:0007669"/>
    <property type="project" value="UniProtKB-UniRule"/>
</dbReference>
<dbReference type="CDD" id="cd00165">
    <property type="entry name" value="S4"/>
    <property type="match status" value="1"/>
</dbReference>
<dbReference type="FunFam" id="3.10.290.10:FF:000026">
    <property type="entry name" value="30S ribosomal protein S4"/>
    <property type="match status" value="1"/>
</dbReference>
<dbReference type="Gene3D" id="3.10.290.10">
    <property type="entry name" value="RNA-binding S4 domain"/>
    <property type="match status" value="1"/>
</dbReference>
<dbReference type="HAMAP" id="MF_01306_A">
    <property type="entry name" value="Ribosomal_uS4_A"/>
    <property type="match status" value="1"/>
</dbReference>
<dbReference type="InterPro" id="IPR022801">
    <property type="entry name" value="Ribosomal_uS4"/>
</dbReference>
<dbReference type="InterPro" id="IPR022802">
    <property type="entry name" value="Ribosomal_uS4_arc"/>
</dbReference>
<dbReference type="InterPro" id="IPR018079">
    <property type="entry name" value="Ribosomal_uS4_CS"/>
</dbReference>
<dbReference type="InterPro" id="IPR005710">
    <property type="entry name" value="Ribosomal_uS4_euk/arc"/>
</dbReference>
<dbReference type="InterPro" id="IPR001912">
    <property type="entry name" value="Ribosomal_uS4_N"/>
</dbReference>
<dbReference type="InterPro" id="IPR002942">
    <property type="entry name" value="S4_RNA-bd"/>
</dbReference>
<dbReference type="InterPro" id="IPR036986">
    <property type="entry name" value="S4_RNA-bd_sf"/>
</dbReference>
<dbReference type="NCBIfam" id="NF003139">
    <property type="entry name" value="PRK04051.1"/>
    <property type="match status" value="1"/>
</dbReference>
<dbReference type="NCBIfam" id="TIGR01018">
    <property type="entry name" value="uS4_arch"/>
    <property type="match status" value="1"/>
</dbReference>
<dbReference type="PANTHER" id="PTHR11831">
    <property type="entry name" value="30S 40S RIBOSOMAL PROTEIN"/>
    <property type="match status" value="1"/>
</dbReference>
<dbReference type="PANTHER" id="PTHR11831:SF5">
    <property type="entry name" value="40S RIBOSOMAL PROTEIN S9"/>
    <property type="match status" value="1"/>
</dbReference>
<dbReference type="Pfam" id="PF01479">
    <property type="entry name" value="S4"/>
    <property type="match status" value="1"/>
</dbReference>
<dbReference type="SMART" id="SM01390">
    <property type="entry name" value="Ribosomal_S4"/>
    <property type="match status" value="1"/>
</dbReference>
<dbReference type="SMART" id="SM00363">
    <property type="entry name" value="S4"/>
    <property type="match status" value="1"/>
</dbReference>
<dbReference type="SUPFAM" id="SSF55174">
    <property type="entry name" value="Alpha-L RNA-binding motif"/>
    <property type="match status" value="1"/>
</dbReference>
<dbReference type="PROSITE" id="PS00632">
    <property type="entry name" value="RIBOSOMAL_S4"/>
    <property type="match status" value="1"/>
</dbReference>
<dbReference type="PROSITE" id="PS50889">
    <property type="entry name" value="S4"/>
    <property type="match status" value="1"/>
</dbReference>
<name>RS4_METMP</name>